<organism>
    <name type="scientific">Staphylococcus saprophyticus subsp. saprophyticus (strain ATCC 15305 / DSM 20229 / NCIMB 8711 / NCTC 7292 / S-41)</name>
    <dbReference type="NCBI Taxonomy" id="342451"/>
    <lineage>
        <taxon>Bacteria</taxon>
        <taxon>Bacillati</taxon>
        <taxon>Bacillota</taxon>
        <taxon>Bacilli</taxon>
        <taxon>Bacillales</taxon>
        <taxon>Staphylococcaceae</taxon>
        <taxon>Staphylococcus</taxon>
    </lineage>
</organism>
<sequence length="800" mass="88855">MFISKEWLESYVEINEQVNVLAERITRTGIEVDDIIDYTKEIKNLVVGYVQSIAAHPDADKLNICQVDIGEAEPVQIVCGAPNVDAGQTVIVASVGGRLPGGVKIKRAKLRGEHSEGMICSLQEVGVPSNLVPKQFEDGIFVFSTEVKPGTDALDALYLNDQVMEFDLTPNRADALSMIGTAYETAALYNVPMTKPETQSTETSDQTNDEISVNIQNEDKVPYYSARVVKNVTIAPSPEWMQMRLIKAGIRPINNVVDISNYVLIEYGQPLHMFDQDQIGSKHIEVRQAKADEEMTTLDNQERQLKENDIVITNGETPIAIAGVMGGDFSEVTEATKHVVIEGAIFDPVSIRHTSRRLNLRSEASSRFEKGIATEFVDEAVDRACYLLQTYAGGSVAQGRVSQGELGCFVTPIDISVSKVNQTIGFELSAEDIESIFVQLGFETTKNKDVLTVMVPSRRKDISIKEDLIEEIARIYGYDKIPSTLPVFDQVTHGALTDRQSKSRIIKATLEGAGLNQAINYSLVDKDRAKDFALQERETIDLLMPMSEAHSTLRQSLIPHLIDAVAYNVARKNSDVRLYELGSVFFANGEDELPDEVEYLSGILTGDYTVNHWQSKKETIDFFVAKGIVDRIAEKLDIQFEYEAGEINGLHPGRTAYVELNGEIVGFVGELHPKTEKDYDLKRTYVFELNFDKLMSVSVGYINYQAIPRFPGVSRDIALVVNRATPSAKLVNIIHEHGGNILQEAEVFDVYEGEHMAEDEKSIAIRLAYLDTEQTLTDDKVNAVHEAILEALKSEGATIR</sequence>
<gene>
    <name evidence="1" type="primary">pheT</name>
    <name type="ordered locus">SSP1656</name>
</gene>
<accession>Q49WQ6</accession>
<name>SYFB_STAS1</name>
<keyword id="KW-0030">Aminoacyl-tRNA synthetase</keyword>
<keyword id="KW-0067">ATP-binding</keyword>
<keyword id="KW-0963">Cytoplasm</keyword>
<keyword id="KW-0436">Ligase</keyword>
<keyword id="KW-0460">Magnesium</keyword>
<keyword id="KW-0479">Metal-binding</keyword>
<keyword id="KW-0547">Nucleotide-binding</keyword>
<keyword id="KW-0648">Protein biosynthesis</keyword>
<keyword id="KW-1185">Reference proteome</keyword>
<keyword id="KW-0694">RNA-binding</keyword>
<keyword id="KW-0820">tRNA-binding</keyword>
<feature type="chain" id="PRO_0000232091" description="Phenylalanine--tRNA ligase beta subunit">
    <location>
        <begin position="1"/>
        <end position="800"/>
    </location>
</feature>
<feature type="domain" description="tRNA-binding" evidence="1">
    <location>
        <begin position="39"/>
        <end position="154"/>
    </location>
</feature>
<feature type="domain" description="B5" evidence="1">
    <location>
        <begin position="408"/>
        <end position="483"/>
    </location>
</feature>
<feature type="domain" description="FDX-ACB" evidence="1">
    <location>
        <begin position="708"/>
        <end position="800"/>
    </location>
</feature>
<feature type="binding site" evidence="1">
    <location>
        <position position="461"/>
    </location>
    <ligand>
        <name>Mg(2+)</name>
        <dbReference type="ChEBI" id="CHEBI:18420"/>
        <note>shared with alpha subunit</note>
    </ligand>
</feature>
<feature type="binding site" evidence="1">
    <location>
        <position position="467"/>
    </location>
    <ligand>
        <name>Mg(2+)</name>
        <dbReference type="ChEBI" id="CHEBI:18420"/>
        <note>shared with alpha subunit</note>
    </ligand>
</feature>
<feature type="binding site" evidence="1">
    <location>
        <position position="470"/>
    </location>
    <ligand>
        <name>Mg(2+)</name>
        <dbReference type="ChEBI" id="CHEBI:18420"/>
        <note>shared with alpha subunit</note>
    </ligand>
</feature>
<feature type="binding site" evidence="1">
    <location>
        <position position="471"/>
    </location>
    <ligand>
        <name>Mg(2+)</name>
        <dbReference type="ChEBI" id="CHEBI:18420"/>
        <note>shared with alpha subunit</note>
    </ligand>
</feature>
<reference key="1">
    <citation type="journal article" date="2005" name="Proc. Natl. Acad. Sci. U.S.A.">
        <title>Whole genome sequence of Staphylococcus saprophyticus reveals the pathogenesis of uncomplicated urinary tract infection.</title>
        <authorList>
            <person name="Kuroda M."/>
            <person name="Yamashita A."/>
            <person name="Hirakawa H."/>
            <person name="Kumano M."/>
            <person name="Morikawa K."/>
            <person name="Higashide M."/>
            <person name="Maruyama A."/>
            <person name="Inose Y."/>
            <person name="Matoba K."/>
            <person name="Toh H."/>
            <person name="Kuhara S."/>
            <person name="Hattori M."/>
            <person name="Ohta T."/>
        </authorList>
    </citation>
    <scope>NUCLEOTIDE SEQUENCE [LARGE SCALE GENOMIC DNA]</scope>
    <source>
        <strain>ATCC 15305 / DSM 20229 / NCIMB 8711 / NCTC 7292 / S-41</strain>
    </source>
</reference>
<proteinExistence type="inferred from homology"/>
<comment type="catalytic activity">
    <reaction evidence="1">
        <text>tRNA(Phe) + L-phenylalanine + ATP = L-phenylalanyl-tRNA(Phe) + AMP + diphosphate + H(+)</text>
        <dbReference type="Rhea" id="RHEA:19413"/>
        <dbReference type="Rhea" id="RHEA-COMP:9668"/>
        <dbReference type="Rhea" id="RHEA-COMP:9699"/>
        <dbReference type="ChEBI" id="CHEBI:15378"/>
        <dbReference type="ChEBI" id="CHEBI:30616"/>
        <dbReference type="ChEBI" id="CHEBI:33019"/>
        <dbReference type="ChEBI" id="CHEBI:58095"/>
        <dbReference type="ChEBI" id="CHEBI:78442"/>
        <dbReference type="ChEBI" id="CHEBI:78531"/>
        <dbReference type="ChEBI" id="CHEBI:456215"/>
        <dbReference type="EC" id="6.1.1.20"/>
    </reaction>
</comment>
<comment type="cofactor">
    <cofactor evidence="1">
        <name>Mg(2+)</name>
        <dbReference type="ChEBI" id="CHEBI:18420"/>
    </cofactor>
    <text evidence="1">Binds 2 magnesium ions per tetramer.</text>
</comment>
<comment type="subunit">
    <text evidence="1">Tetramer of two alpha and two beta subunits.</text>
</comment>
<comment type="subcellular location">
    <subcellularLocation>
        <location>Cytoplasm</location>
    </subcellularLocation>
</comment>
<comment type="similarity">
    <text evidence="1">Belongs to the phenylalanyl-tRNA synthetase beta subunit family. Type 1 subfamily.</text>
</comment>
<evidence type="ECO:0000255" key="1">
    <source>
        <dbReference type="HAMAP-Rule" id="MF_00283"/>
    </source>
</evidence>
<protein>
    <recommendedName>
        <fullName evidence="1">Phenylalanine--tRNA ligase beta subunit</fullName>
        <ecNumber evidence="1">6.1.1.20</ecNumber>
    </recommendedName>
    <alternativeName>
        <fullName evidence="1">Phenylalanyl-tRNA synthetase beta subunit</fullName>
        <shortName evidence="1">PheRS</shortName>
    </alternativeName>
</protein>
<dbReference type="EC" id="6.1.1.20" evidence="1"/>
<dbReference type="EMBL" id="AP008934">
    <property type="protein sequence ID" value="BAE18801.1"/>
    <property type="molecule type" value="Genomic_DNA"/>
</dbReference>
<dbReference type="RefSeq" id="WP_011303388.1">
    <property type="nucleotide sequence ID" value="NC_007350.1"/>
</dbReference>
<dbReference type="SMR" id="Q49WQ6"/>
<dbReference type="GeneID" id="3615146"/>
<dbReference type="KEGG" id="ssp:SSP1656"/>
<dbReference type="PATRIC" id="fig|342451.11.peg.1655"/>
<dbReference type="eggNOG" id="COG0072">
    <property type="taxonomic scope" value="Bacteria"/>
</dbReference>
<dbReference type="HOGENOM" id="CLU_016891_0_0_9"/>
<dbReference type="OrthoDB" id="9805455at2"/>
<dbReference type="Proteomes" id="UP000006371">
    <property type="component" value="Chromosome"/>
</dbReference>
<dbReference type="GO" id="GO:0009328">
    <property type="term" value="C:phenylalanine-tRNA ligase complex"/>
    <property type="evidence" value="ECO:0007669"/>
    <property type="project" value="TreeGrafter"/>
</dbReference>
<dbReference type="GO" id="GO:0005524">
    <property type="term" value="F:ATP binding"/>
    <property type="evidence" value="ECO:0007669"/>
    <property type="project" value="UniProtKB-UniRule"/>
</dbReference>
<dbReference type="GO" id="GO:0140096">
    <property type="term" value="F:catalytic activity, acting on a protein"/>
    <property type="evidence" value="ECO:0007669"/>
    <property type="project" value="UniProtKB-ARBA"/>
</dbReference>
<dbReference type="GO" id="GO:0000287">
    <property type="term" value="F:magnesium ion binding"/>
    <property type="evidence" value="ECO:0007669"/>
    <property type="project" value="UniProtKB-UniRule"/>
</dbReference>
<dbReference type="GO" id="GO:0004826">
    <property type="term" value="F:phenylalanine-tRNA ligase activity"/>
    <property type="evidence" value="ECO:0007669"/>
    <property type="project" value="UniProtKB-UniRule"/>
</dbReference>
<dbReference type="GO" id="GO:0016740">
    <property type="term" value="F:transferase activity"/>
    <property type="evidence" value="ECO:0007669"/>
    <property type="project" value="UniProtKB-ARBA"/>
</dbReference>
<dbReference type="GO" id="GO:0000049">
    <property type="term" value="F:tRNA binding"/>
    <property type="evidence" value="ECO:0007669"/>
    <property type="project" value="UniProtKB-KW"/>
</dbReference>
<dbReference type="GO" id="GO:0006432">
    <property type="term" value="P:phenylalanyl-tRNA aminoacylation"/>
    <property type="evidence" value="ECO:0007669"/>
    <property type="project" value="UniProtKB-UniRule"/>
</dbReference>
<dbReference type="CDD" id="cd00769">
    <property type="entry name" value="PheRS_beta_core"/>
    <property type="match status" value="1"/>
</dbReference>
<dbReference type="CDD" id="cd02796">
    <property type="entry name" value="tRNA_bind_bactPheRS"/>
    <property type="match status" value="1"/>
</dbReference>
<dbReference type="FunFam" id="2.40.50.140:FF:000045">
    <property type="entry name" value="Phenylalanine--tRNA ligase beta subunit"/>
    <property type="match status" value="1"/>
</dbReference>
<dbReference type="FunFam" id="3.30.56.10:FF:000002">
    <property type="entry name" value="Phenylalanine--tRNA ligase beta subunit"/>
    <property type="match status" value="1"/>
</dbReference>
<dbReference type="FunFam" id="3.30.70.380:FF:000001">
    <property type="entry name" value="Phenylalanine--tRNA ligase beta subunit"/>
    <property type="match status" value="1"/>
</dbReference>
<dbReference type="FunFam" id="3.30.930.10:FF:000022">
    <property type="entry name" value="Phenylalanine--tRNA ligase beta subunit"/>
    <property type="match status" value="1"/>
</dbReference>
<dbReference type="FunFam" id="3.50.40.10:FF:000001">
    <property type="entry name" value="Phenylalanine--tRNA ligase beta subunit"/>
    <property type="match status" value="1"/>
</dbReference>
<dbReference type="Gene3D" id="3.30.56.10">
    <property type="match status" value="2"/>
</dbReference>
<dbReference type="Gene3D" id="3.30.930.10">
    <property type="entry name" value="Bira Bifunctional Protein, Domain 2"/>
    <property type="match status" value="1"/>
</dbReference>
<dbReference type="Gene3D" id="3.30.70.380">
    <property type="entry name" value="Ferrodoxin-fold anticodon-binding domain"/>
    <property type="match status" value="1"/>
</dbReference>
<dbReference type="Gene3D" id="2.40.50.140">
    <property type="entry name" value="Nucleic acid-binding proteins"/>
    <property type="match status" value="1"/>
</dbReference>
<dbReference type="Gene3D" id="3.50.40.10">
    <property type="entry name" value="Phenylalanyl-trna Synthetase, Chain B, domain 3"/>
    <property type="match status" value="1"/>
</dbReference>
<dbReference type="HAMAP" id="MF_00283">
    <property type="entry name" value="Phe_tRNA_synth_beta1"/>
    <property type="match status" value="1"/>
</dbReference>
<dbReference type="InterPro" id="IPR045864">
    <property type="entry name" value="aa-tRNA-synth_II/BPL/LPL"/>
</dbReference>
<dbReference type="InterPro" id="IPR005146">
    <property type="entry name" value="B3/B4_tRNA-bd"/>
</dbReference>
<dbReference type="InterPro" id="IPR009061">
    <property type="entry name" value="DNA-bd_dom_put_sf"/>
</dbReference>
<dbReference type="InterPro" id="IPR005121">
    <property type="entry name" value="Fdx_antiC-bd"/>
</dbReference>
<dbReference type="InterPro" id="IPR036690">
    <property type="entry name" value="Fdx_antiC-bd_sf"/>
</dbReference>
<dbReference type="InterPro" id="IPR012340">
    <property type="entry name" value="NA-bd_OB-fold"/>
</dbReference>
<dbReference type="InterPro" id="IPR045060">
    <property type="entry name" value="Phe-tRNA-ligase_IIc_bsu"/>
</dbReference>
<dbReference type="InterPro" id="IPR004532">
    <property type="entry name" value="Phe-tRNA-ligase_IIc_bsu_bact"/>
</dbReference>
<dbReference type="InterPro" id="IPR020825">
    <property type="entry name" value="Phe-tRNA_synthase-like_B3/B4"/>
</dbReference>
<dbReference type="InterPro" id="IPR041616">
    <property type="entry name" value="PheRS_beta_core"/>
</dbReference>
<dbReference type="InterPro" id="IPR002547">
    <property type="entry name" value="tRNA-bd_dom"/>
</dbReference>
<dbReference type="InterPro" id="IPR033714">
    <property type="entry name" value="tRNA_bind_bactPheRS"/>
</dbReference>
<dbReference type="InterPro" id="IPR005147">
    <property type="entry name" value="tRNA_synthase_B5-dom"/>
</dbReference>
<dbReference type="NCBIfam" id="TIGR00472">
    <property type="entry name" value="pheT_bact"/>
    <property type="match status" value="1"/>
</dbReference>
<dbReference type="NCBIfam" id="NF045760">
    <property type="entry name" value="YtpR"/>
    <property type="match status" value="1"/>
</dbReference>
<dbReference type="PANTHER" id="PTHR10947:SF0">
    <property type="entry name" value="PHENYLALANINE--TRNA LIGASE BETA SUBUNIT"/>
    <property type="match status" value="1"/>
</dbReference>
<dbReference type="PANTHER" id="PTHR10947">
    <property type="entry name" value="PHENYLALANYL-TRNA SYNTHETASE BETA CHAIN AND LEUCINE-RICH REPEAT-CONTAINING PROTEIN 47"/>
    <property type="match status" value="1"/>
</dbReference>
<dbReference type="Pfam" id="PF03483">
    <property type="entry name" value="B3_4"/>
    <property type="match status" value="1"/>
</dbReference>
<dbReference type="Pfam" id="PF03484">
    <property type="entry name" value="B5"/>
    <property type="match status" value="1"/>
</dbReference>
<dbReference type="Pfam" id="PF03147">
    <property type="entry name" value="FDX-ACB"/>
    <property type="match status" value="1"/>
</dbReference>
<dbReference type="Pfam" id="PF01588">
    <property type="entry name" value="tRNA_bind"/>
    <property type="match status" value="1"/>
</dbReference>
<dbReference type="Pfam" id="PF17759">
    <property type="entry name" value="tRNA_synthFbeta"/>
    <property type="match status" value="1"/>
</dbReference>
<dbReference type="SMART" id="SM00873">
    <property type="entry name" value="B3_4"/>
    <property type="match status" value="1"/>
</dbReference>
<dbReference type="SMART" id="SM00874">
    <property type="entry name" value="B5"/>
    <property type="match status" value="1"/>
</dbReference>
<dbReference type="SMART" id="SM00896">
    <property type="entry name" value="FDX-ACB"/>
    <property type="match status" value="1"/>
</dbReference>
<dbReference type="SUPFAM" id="SSF54991">
    <property type="entry name" value="Anticodon-binding domain of PheRS"/>
    <property type="match status" value="1"/>
</dbReference>
<dbReference type="SUPFAM" id="SSF55681">
    <property type="entry name" value="Class II aaRS and biotin synthetases"/>
    <property type="match status" value="1"/>
</dbReference>
<dbReference type="SUPFAM" id="SSF50249">
    <property type="entry name" value="Nucleic acid-binding proteins"/>
    <property type="match status" value="1"/>
</dbReference>
<dbReference type="SUPFAM" id="SSF56037">
    <property type="entry name" value="PheT/TilS domain"/>
    <property type="match status" value="1"/>
</dbReference>
<dbReference type="SUPFAM" id="SSF46955">
    <property type="entry name" value="Putative DNA-binding domain"/>
    <property type="match status" value="1"/>
</dbReference>
<dbReference type="PROSITE" id="PS51483">
    <property type="entry name" value="B5"/>
    <property type="match status" value="1"/>
</dbReference>
<dbReference type="PROSITE" id="PS51447">
    <property type="entry name" value="FDX_ACB"/>
    <property type="match status" value="1"/>
</dbReference>
<dbReference type="PROSITE" id="PS50886">
    <property type="entry name" value="TRBD"/>
    <property type="match status" value="1"/>
</dbReference>